<name>TILS_SALTO</name>
<keyword id="KW-0067">ATP-binding</keyword>
<keyword id="KW-0963">Cytoplasm</keyword>
<keyword id="KW-0436">Ligase</keyword>
<keyword id="KW-0547">Nucleotide-binding</keyword>
<keyword id="KW-1185">Reference proteome</keyword>
<keyword id="KW-0819">tRNA processing</keyword>
<accession>A4XCT1</accession>
<sequence>MAALAPPVAAIRRAIRHALIELPDPGPVLVACSGGADSLALAAATAFVAPRLGRSAGLVTVDHGLQEGSAQRAAAVADWARATGLAPVEVVRVDVSGRPGGPEAAARQARYRALTEVAGGLGAAALLTGHTRDDQAETVLLALARGAGPRGLAGMPARRWLGAALLLRPLLEVSREQTRAACTALGLDPWVDPHNADPAYARARVRAEVLPALVRALGPAVVDNLARTARLVAVDTAALDEQASTALDGVRHPDGGLSVGGLAALVPAVRGRVLHAWARELGARPAALSHRHVGALEALVTGWRGQGAAHLPGGLRVLRRAGRLTAIDPGAQV</sequence>
<proteinExistence type="inferred from homology"/>
<comment type="function">
    <text evidence="1">Ligates lysine onto the cytidine present at position 34 of the AUA codon-specific tRNA(Ile) that contains the anticodon CAU, in an ATP-dependent manner. Cytidine is converted to lysidine, thus changing the amino acid specificity of the tRNA from methionine to isoleucine.</text>
</comment>
<comment type="catalytic activity">
    <reaction evidence="1">
        <text>cytidine(34) in tRNA(Ile2) + L-lysine + ATP = lysidine(34) in tRNA(Ile2) + AMP + diphosphate + H(+)</text>
        <dbReference type="Rhea" id="RHEA:43744"/>
        <dbReference type="Rhea" id="RHEA-COMP:10625"/>
        <dbReference type="Rhea" id="RHEA-COMP:10670"/>
        <dbReference type="ChEBI" id="CHEBI:15378"/>
        <dbReference type="ChEBI" id="CHEBI:30616"/>
        <dbReference type="ChEBI" id="CHEBI:32551"/>
        <dbReference type="ChEBI" id="CHEBI:33019"/>
        <dbReference type="ChEBI" id="CHEBI:82748"/>
        <dbReference type="ChEBI" id="CHEBI:83665"/>
        <dbReference type="ChEBI" id="CHEBI:456215"/>
        <dbReference type="EC" id="6.3.4.19"/>
    </reaction>
</comment>
<comment type="subcellular location">
    <subcellularLocation>
        <location evidence="1">Cytoplasm</location>
    </subcellularLocation>
</comment>
<comment type="domain">
    <text>The N-terminal region contains the highly conserved SGGXDS motif, predicted to be a P-loop motif involved in ATP binding.</text>
</comment>
<comment type="similarity">
    <text evidence="1">Belongs to the tRNA(Ile)-lysidine synthase family.</text>
</comment>
<gene>
    <name evidence="1" type="primary">tilS</name>
    <name type="ordered locus">Strop_4310</name>
</gene>
<organism>
    <name type="scientific">Salinispora tropica (strain ATCC BAA-916 / DSM 44818 / JCM 13857 / NBRC 105044 / CNB-440)</name>
    <dbReference type="NCBI Taxonomy" id="369723"/>
    <lineage>
        <taxon>Bacteria</taxon>
        <taxon>Bacillati</taxon>
        <taxon>Actinomycetota</taxon>
        <taxon>Actinomycetes</taxon>
        <taxon>Micromonosporales</taxon>
        <taxon>Micromonosporaceae</taxon>
        <taxon>Salinispora</taxon>
    </lineage>
</organism>
<feature type="chain" id="PRO_1000085370" description="tRNA(Ile)-lysidine synthase">
    <location>
        <begin position="1"/>
        <end position="333"/>
    </location>
</feature>
<feature type="binding site" evidence="1">
    <location>
        <begin position="33"/>
        <end position="38"/>
    </location>
    <ligand>
        <name>ATP</name>
        <dbReference type="ChEBI" id="CHEBI:30616"/>
    </ligand>
</feature>
<protein>
    <recommendedName>
        <fullName evidence="1">tRNA(Ile)-lysidine synthase</fullName>
        <ecNumber evidence="1">6.3.4.19</ecNumber>
    </recommendedName>
    <alternativeName>
        <fullName evidence="1">tRNA(Ile)-2-lysyl-cytidine synthase</fullName>
    </alternativeName>
    <alternativeName>
        <fullName evidence="1">tRNA(Ile)-lysidine synthetase</fullName>
    </alternativeName>
</protein>
<dbReference type="EC" id="6.3.4.19" evidence="1"/>
<dbReference type="EMBL" id="CP000667">
    <property type="protein sequence ID" value="ABP56738.1"/>
    <property type="molecule type" value="Genomic_DNA"/>
</dbReference>
<dbReference type="RefSeq" id="WP_012015502.1">
    <property type="nucleotide sequence ID" value="NC_009380.1"/>
</dbReference>
<dbReference type="SMR" id="A4XCT1"/>
<dbReference type="STRING" id="369723.Strop_4310"/>
<dbReference type="KEGG" id="stp:Strop_4310"/>
<dbReference type="PATRIC" id="fig|369723.5.peg.4456"/>
<dbReference type="eggNOG" id="COG0037">
    <property type="taxonomic scope" value="Bacteria"/>
</dbReference>
<dbReference type="HOGENOM" id="CLU_018869_1_0_11"/>
<dbReference type="Proteomes" id="UP000000235">
    <property type="component" value="Chromosome"/>
</dbReference>
<dbReference type="GO" id="GO:0005737">
    <property type="term" value="C:cytoplasm"/>
    <property type="evidence" value="ECO:0007669"/>
    <property type="project" value="UniProtKB-SubCell"/>
</dbReference>
<dbReference type="GO" id="GO:0005524">
    <property type="term" value="F:ATP binding"/>
    <property type="evidence" value="ECO:0007669"/>
    <property type="project" value="UniProtKB-UniRule"/>
</dbReference>
<dbReference type="GO" id="GO:0032267">
    <property type="term" value="F:tRNA(Ile)-lysidine synthase activity"/>
    <property type="evidence" value="ECO:0007669"/>
    <property type="project" value="UniProtKB-EC"/>
</dbReference>
<dbReference type="GO" id="GO:0006400">
    <property type="term" value="P:tRNA modification"/>
    <property type="evidence" value="ECO:0007669"/>
    <property type="project" value="UniProtKB-UniRule"/>
</dbReference>
<dbReference type="CDD" id="cd01992">
    <property type="entry name" value="TilS_N"/>
    <property type="match status" value="1"/>
</dbReference>
<dbReference type="Gene3D" id="1.20.59.20">
    <property type="match status" value="1"/>
</dbReference>
<dbReference type="Gene3D" id="3.40.50.620">
    <property type="entry name" value="HUPs"/>
    <property type="match status" value="1"/>
</dbReference>
<dbReference type="HAMAP" id="MF_01161">
    <property type="entry name" value="tRNA_Ile_lys_synt"/>
    <property type="match status" value="1"/>
</dbReference>
<dbReference type="InterPro" id="IPR014729">
    <property type="entry name" value="Rossmann-like_a/b/a_fold"/>
</dbReference>
<dbReference type="InterPro" id="IPR011063">
    <property type="entry name" value="TilS/TtcA_N"/>
</dbReference>
<dbReference type="InterPro" id="IPR012094">
    <property type="entry name" value="tRNA_Ile_lys_synt"/>
</dbReference>
<dbReference type="InterPro" id="IPR012795">
    <property type="entry name" value="tRNA_Ile_lys_synt_N"/>
</dbReference>
<dbReference type="InterPro" id="IPR015262">
    <property type="entry name" value="tRNA_Ile_lys_synt_subst-bd"/>
</dbReference>
<dbReference type="NCBIfam" id="TIGR02432">
    <property type="entry name" value="lysidine_TilS_N"/>
    <property type="match status" value="1"/>
</dbReference>
<dbReference type="PANTHER" id="PTHR43033">
    <property type="entry name" value="TRNA(ILE)-LYSIDINE SYNTHASE-RELATED"/>
    <property type="match status" value="1"/>
</dbReference>
<dbReference type="PANTHER" id="PTHR43033:SF1">
    <property type="entry name" value="TRNA(ILE)-LYSIDINE SYNTHASE-RELATED"/>
    <property type="match status" value="1"/>
</dbReference>
<dbReference type="Pfam" id="PF01171">
    <property type="entry name" value="ATP_bind_3"/>
    <property type="match status" value="1"/>
</dbReference>
<dbReference type="Pfam" id="PF09179">
    <property type="entry name" value="TilS"/>
    <property type="match status" value="1"/>
</dbReference>
<dbReference type="SUPFAM" id="SSF52402">
    <property type="entry name" value="Adenine nucleotide alpha hydrolases-like"/>
    <property type="match status" value="1"/>
</dbReference>
<dbReference type="SUPFAM" id="SSF82829">
    <property type="entry name" value="MesJ substrate recognition domain-like"/>
    <property type="match status" value="1"/>
</dbReference>
<evidence type="ECO:0000255" key="1">
    <source>
        <dbReference type="HAMAP-Rule" id="MF_01161"/>
    </source>
</evidence>
<reference key="1">
    <citation type="journal article" date="2007" name="Proc. Natl. Acad. Sci. U.S.A.">
        <title>Genome sequencing reveals complex secondary metabolome in the marine actinomycete Salinispora tropica.</title>
        <authorList>
            <person name="Udwary D.W."/>
            <person name="Zeigler L."/>
            <person name="Asolkar R.N."/>
            <person name="Singan V."/>
            <person name="Lapidus A."/>
            <person name="Fenical W."/>
            <person name="Jensen P.R."/>
            <person name="Moore B.S."/>
        </authorList>
    </citation>
    <scope>NUCLEOTIDE SEQUENCE [LARGE SCALE GENOMIC DNA]</scope>
    <source>
        <strain>ATCC BAA-916 / DSM 44818 / JCM 13857 / NBRC 105044 / CNB-440</strain>
    </source>
</reference>